<name>HSP1_BOLBR</name>
<evidence type="ECO:0000256" key="1">
    <source>
        <dbReference type="SAM" id="MobiDB-lite"/>
    </source>
</evidence>
<evidence type="ECO:0000269" key="2">
    <source>
    </source>
</evidence>
<evidence type="ECO:0000305" key="3"/>
<comment type="function">
    <text evidence="2">Protamines substitute for histones in the chromatin of sperm during the haploid phase of spermatogenesis. They compact sperm DNA into a highly condensed, stable and inactive complex.</text>
</comment>
<comment type="subcellular location">
    <subcellularLocation>
        <location evidence="2">Nucleus</location>
    </subcellularLocation>
    <subcellularLocation>
        <location evidence="2">Chromosome</location>
    </subcellularLocation>
</comment>
<comment type="tissue specificity">
    <text evidence="2">Gonads.</text>
</comment>
<comment type="PTM">
    <text evidence="2">A series of N-terminal cleavages yield the mature protein.</text>
</comment>
<comment type="PTM">
    <text evidence="2">Only the mature protein is phosphorylated.</text>
</comment>
<comment type="mass spectrometry"/>
<keyword id="KW-0158">Chromosome</keyword>
<keyword id="KW-0217">Developmental protein</keyword>
<keyword id="KW-0221">Differentiation</keyword>
<keyword id="KW-0903">Direct protein sequencing</keyword>
<keyword id="KW-0226">DNA condensation</keyword>
<keyword id="KW-0238">DNA-binding</keyword>
<keyword id="KW-0544">Nucleosome core</keyword>
<keyword id="KW-0539">Nucleus</keyword>
<keyword id="KW-0597">Phosphoprotein</keyword>
<keyword id="KW-0744">Spermatogenesis</keyword>
<proteinExistence type="evidence at protein level"/>
<sequence>ALRKVDRNRFVLDNVTPQPREAKRYKEEEEFPGHGRRRRRRSKGKGKAKGKGKGKGKRRRRRKGKGKGKGKKKGKGRRRRCRRGRGCKKRKGKKGKGRRRRRGKKGK</sequence>
<reference evidence="3" key="1">
    <citation type="journal article" date="1999" name="J. Biol. Chem.">
        <title>DNA-interacting proteins in the spermiogenesis of the mollusc Murex brandaris.</title>
        <authorList>
            <person name="Caceres C."/>
            <person name="Gimenez-Bonafe P."/>
            <person name="Ribes E."/>
            <person name="Wouters-Tyrou D."/>
            <person name="Martinage A."/>
            <person name="Kouach M."/>
            <person name="Sautiere P."/>
            <person name="Muller S."/>
            <person name="Palau J."/>
            <person name="Subirana J.A."/>
            <person name="Cornudella L."/>
            <person name="Chiva M."/>
        </authorList>
    </citation>
    <scope>PROTEIN SEQUENCE</scope>
    <scope>FUNCTION</scope>
    <scope>SUBCELLULAR LOCATION</scope>
    <scope>PHOSPHORYLATION AT SER-42</scope>
    <scope>MASS SPECTROMETRY</scope>
    <source>
        <tissue>Gonad</tissue>
        <tissue>Sperm</tissue>
    </source>
</reference>
<protein>
    <recommendedName>
        <fullName>Sperm protamine P1</fullName>
    </recommendedName>
</protein>
<dbReference type="iPTMnet" id="P83211"/>
<dbReference type="GO" id="GO:0000786">
    <property type="term" value="C:nucleosome"/>
    <property type="evidence" value="ECO:0007669"/>
    <property type="project" value="UniProtKB-KW"/>
</dbReference>
<dbReference type="GO" id="GO:0005634">
    <property type="term" value="C:nucleus"/>
    <property type="evidence" value="ECO:0007669"/>
    <property type="project" value="UniProtKB-SubCell"/>
</dbReference>
<dbReference type="GO" id="GO:0003677">
    <property type="term" value="F:DNA binding"/>
    <property type="evidence" value="ECO:0007669"/>
    <property type="project" value="UniProtKB-KW"/>
</dbReference>
<dbReference type="GO" id="GO:0030154">
    <property type="term" value="P:cell differentiation"/>
    <property type="evidence" value="ECO:0007669"/>
    <property type="project" value="UniProtKB-KW"/>
</dbReference>
<dbReference type="GO" id="GO:0030261">
    <property type="term" value="P:chromosome condensation"/>
    <property type="evidence" value="ECO:0007669"/>
    <property type="project" value="UniProtKB-KW"/>
</dbReference>
<dbReference type="GO" id="GO:0007283">
    <property type="term" value="P:spermatogenesis"/>
    <property type="evidence" value="ECO:0007669"/>
    <property type="project" value="UniProtKB-KW"/>
</dbReference>
<accession>P83211</accession>
<feature type="propeptide" id="PRO_0000025827" description="Removed in mature form">
    <location>
        <begin position="1"/>
        <end position="35"/>
    </location>
</feature>
<feature type="chain" id="PRO_0000025828" description="Sperm protamine P1">
    <location>
        <begin position="36"/>
        <end position="107"/>
    </location>
</feature>
<feature type="region of interest" description="Disordered" evidence="1">
    <location>
        <begin position="1"/>
        <end position="107"/>
    </location>
</feature>
<feature type="compositionally biased region" description="Basic and acidic residues" evidence="1">
    <location>
        <begin position="1"/>
        <end position="10"/>
    </location>
</feature>
<feature type="compositionally biased region" description="Basic and acidic residues" evidence="1">
    <location>
        <begin position="20"/>
        <end position="33"/>
    </location>
</feature>
<feature type="compositionally biased region" description="Basic residues" evidence="1">
    <location>
        <begin position="34"/>
        <end position="107"/>
    </location>
</feature>
<feature type="modified residue" description="Phosphoserine" evidence="2">
    <location>
        <position position="42"/>
    </location>
</feature>
<organism evidence="3">
    <name type="scientific">Bolinus brandaris</name>
    <name type="common">Purple dye murex</name>
    <name type="synonym">Murex brandaris</name>
    <dbReference type="NCBI Taxonomy" id="179646"/>
    <lineage>
        <taxon>Eukaryota</taxon>
        <taxon>Metazoa</taxon>
        <taxon>Spiralia</taxon>
        <taxon>Lophotrochozoa</taxon>
        <taxon>Mollusca</taxon>
        <taxon>Gastropoda</taxon>
        <taxon>Caenogastropoda</taxon>
        <taxon>Neogastropoda</taxon>
        <taxon>Muricoidea</taxon>
        <taxon>Muricidae</taxon>
        <taxon>Bolinus</taxon>
    </lineage>
</organism>